<accession>P37432</accession>
<dbReference type="EMBL" id="Z31594">
    <property type="protein sequence ID" value="CAA83471.1"/>
    <property type="molecule type" value="Genomic_DNA"/>
</dbReference>
<dbReference type="EMBL" id="AE006468">
    <property type="protein sequence ID" value="AAL19933.1"/>
    <property type="molecule type" value="Genomic_DNA"/>
</dbReference>
<dbReference type="PIR" id="S43159">
    <property type="entry name" value="S43159"/>
</dbReference>
<dbReference type="RefSeq" id="NP_459974.1">
    <property type="nucleotide sequence ID" value="NC_003197.2"/>
</dbReference>
<dbReference type="RefSeq" id="WP_000977713.1">
    <property type="nucleotide sequence ID" value="NC_003197.2"/>
</dbReference>
<dbReference type="PDB" id="3NSG">
    <property type="method" value="X-ray"/>
    <property type="resolution" value="2.79 A"/>
    <property type="chains" value="A/B/C=24-363"/>
</dbReference>
<dbReference type="PDB" id="4KR4">
    <property type="method" value="X-ray"/>
    <property type="resolution" value="3.80 A"/>
    <property type="chains" value="A/B/C=24-363"/>
</dbReference>
<dbReference type="PDB" id="4KR8">
    <property type="method" value="X-ray"/>
    <property type="resolution" value="3.10 A"/>
    <property type="chains" value="A/B/C=24-363"/>
</dbReference>
<dbReference type="PDB" id="4KRA">
    <property type="method" value="X-ray"/>
    <property type="resolution" value="3.32 A"/>
    <property type="chains" value="A/B/C=24-363"/>
</dbReference>
<dbReference type="PDBsum" id="3NSG"/>
<dbReference type="PDBsum" id="4KR4"/>
<dbReference type="PDBsum" id="4KR8"/>
<dbReference type="PDBsum" id="4KRA"/>
<dbReference type="SMR" id="P37432"/>
<dbReference type="STRING" id="99287.STM0999"/>
<dbReference type="PaxDb" id="99287-STM0999"/>
<dbReference type="GeneID" id="1252517"/>
<dbReference type="KEGG" id="stm:STM0999"/>
<dbReference type="PATRIC" id="fig|99287.12.peg.1052"/>
<dbReference type="HOGENOM" id="CLU_058202_0_0_6"/>
<dbReference type="OMA" id="NMTREAD"/>
<dbReference type="PhylomeDB" id="P37432"/>
<dbReference type="BioCyc" id="SENT99287:STM0999-MONOMER"/>
<dbReference type="EvolutionaryTrace" id="P37432"/>
<dbReference type="Proteomes" id="UP000001014">
    <property type="component" value="Chromosome"/>
</dbReference>
<dbReference type="GO" id="GO:0009279">
    <property type="term" value="C:cell outer membrane"/>
    <property type="evidence" value="ECO:0007669"/>
    <property type="project" value="UniProtKB-SubCell"/>
</dbReference>
<dbReference type="GO" id="GO:0046930">
    <property type="term" value="C:pore complex"/>
    <property type="evidence" value="ECO:0000318"/>
    <property type="project" value="GO_Central"/>
</dbReference>
<dbReference type="GO" id="GO:0015288">
    <property type="term" value="F:porin activity"/>
    <property type="evidence" value="ECO:0000318"/>
    <property type="project" value="GO_Central"/>
</dbReference>
<dbReference type="GO" id="GO:0034220">
    <property type="term" value="P:monoatomic ion transmembrane transport"/>
    <property type="evidence" value="ECO:0007669"/>
    <property type="project" value="InterPro"/>
</dbReference>
<dbReference type="CDD" id="cd00342">
    <property type="entry name" value="gram_neg_porins"/>
    <property type="match status" value="1"/>
</dbReference>
<dbReference type="Gene3D" id="2.40.160.10">
    <property type="entry name" value="Porin"/>
    <property type="match status" value="1"/>
</dbReference>
<dbReference type="InterPro" id="IPR050298">
    <property type="entry name" value="Gram-neg_bact_OMP"/>
</dbReference>
<dbReference type="InterPro" id="IPR033900">
    <property type="entry name" value="Gram_neg_porin_domain"/>
</dbReference>
<dbReference type="InterPro" id="IPR023614">
    <property type="entry name" value="Porin_dom_sf"/>
</dbReference>
<dbReference type="InterPro" id="IPR001897">
    <property type="entry name" value="Porin_gammaproteobac"/>
</dbReference>
<dbReference type="InterPro" id="IPR001702">
    <property type="entry name" value="Porin_Gram-ve"/>
</dbReference>
<dbReference type="InterPro" id="IPR013793">
    <property type="entry name" value="Porin_Gram-ve_CS"/>
</dbReference>
<dbReference type="PANTHER" id="PTHR34501:SF8">
    <property type="entry name" value="OUTER MEMBRANE PORIN N-RELATED"/>
    <property type="match status" value="1"/>
</dbReference>
<dbReference type="PANTHER" id="PTHR34501">
    <property type="entry name" value="PROTEIN YDDL-RELATED"/>
    <property type="match status" value="1"/>
</dbReference>
<dbReference type="Pfam" id="PF00267">
    <property type="entry name" value="Porin_1"/>
    <property type="match status" value="1"/>
</dbReference>
<dbReference type="PRINTS" id="PR00183">
    <property type="entry name" value="ECOLIPORIN"/>
</dbReference>
<dbReference type="PRINTS" id="PR00182">
    <property type="entry name" value="ECOLNEIPORIN"/>
</dbReference>
<dbReference type="SUPFAM" id="SSF56935">
    <property type="entry name" value="Porins"/>
    <property type="match status" value="1"/>
</dbReference>
<dbReference type="PROSITE" id="PS00576">
    <property type="entry name" value="GRAM_NEG_PORIN"/>
    <property type="match status" value="1"/>
</dbReference>
<comment type="function">
    <text evidence="1">Forms pores that allow passive diffusion of small molecules across the outer membrane. It is also a receptor for the bacteriophage T2 (By similarity).</text>
</comment>
<comment type="subunit">
    <text evidence="1">Homotrimer.</text>
</comment>
<comment type="subcellular location">
    <subcellularLocation>
        <location evidence="1">Cell outer membrane</location>
        <topology evidence="1">Multi-pass membrane protein</topology>
    </subcellularLocation>
</comment>
<comment type="similarity">
    <text evidence="2">Belongs to the Gram-negative porin family.</text>
</comment>
<protein>
    <recommendedName>
        <fullName>Outer membrane porin F</fullName>
    </recommendedName>
    <alternativeName>
        <fullName>Outer membrane protein 1A</fullName>
    </alternativeName>
    <alternativeName>
        <fullName>Outer membrane protein B</fullName>
    </alternativeName>
    <alternativeName>
        <fullName>Outer membrane protein F</fullName>
    </alternativeName>
    <alternativeName>
        <fullName>Outer membrane protein IA</fullName>
    </alternativeName>
    <alternativeName>
        <fullName>Porin OmpF</fullName>
    </alternativeName>
</protein>
<organism>
    <name type="scientific">Salmonella typhimurium (strain LT2 / SGSC1412 / ATCC 700720)</name>
    <dbReference type="NCBI Taxonomy" id="99287"/>
    <lineage>
        <taxon>Bacteria</taxon>
        <taxon>Pseudomonadati</taxon>
        <taxon>Pseudomonadota</taxon>
        <taxon>Gammaproteobacteria</taxon>
        <taxon>Enterobacterales</taxon>
        <taxon>Enterobacteriaceae</taxon>
        <taxon>Salmonella</taxon>
    </lineage>
</organism>
<evidence type="ECO:0000250" key="1"/>
<evidence type="ECO:0000305" key="2"/>
<evidence type="ECO:0007829" key="3">
    <source>
        <dbReference type="PDB" id="3NSG"/>
    </source>
</evidence>
<evidence type="ECO:0007829" key="4">
    <source>
        <dbReference type="PDB" id="4KR8"/>
    </source>
</evidence>
<evidence type="ECO:0007829" key="5">
    <source>
        <dbReference type="PDB" id="4KRA"/>
    </source>
</evidence>
<name>OMPF_SALTY</name>
<gene>
    <name type="primary">ompF</name>
    <name type="ordered locus">STM0999</name>
</gene>
<reference key="1">
    <citation type="submission" date="1994-03" db="EMBL/GenBank/DDBJ databases">
        <authorList>
            <person name="Venegas A."/>
            <person name="Gomez I."/>
            <person name="Bruce E."/>
            <person name="Martinez M."/>
        </authorList>
    </citation>
    <scope>NUCLEOTIDE SEQUENCE [GENOMIC DNA]</scope>
    <source>
        <strain>LT2</strain>
    </source>
</reference>
<reference key="2">
    <citation type="journal article" date="2001" name="Nature">
        <title>Complete genome sequence of Salmonella enterica serovar Typhimurium LT2.</title>
        <authorList>
            <person name="McClelland M."/>
            <person name="Sanderson K.E."/>
            <person name="Spieth J."/>
            <person name="Clifton S.W."/>
            <person name="Latreille P."/>
            <person name="Courtney L."/>
            <person name="Porwollik S."/>
            <person name="Ali J."/>
            <person name="Dante M."/>
            <person name="Du F."/>
            <person name="Hou S."/>
            <person name="Layman D."/>
            <person name="Leonard S."/>
            <person name="Nguyen C."/>
            <person name="Scott K."/>
            <person name="Holmes A."/>
            <person name="Grewal N."/>
            <person name="Mulvaney E."/>
            <person name="Ryan E."/>
            <person name="Sun H."/>
            <person name="Florea L."/>
            <person name="Miller W."/>
            <person name="Stoneking T."/>
            <person name="Nhan M."/>
            <person name="Waterston R."/>
            <person name="Wilson R.K."/>
        </authorList>
    </citation>
    <scope>NUCLEOTIDE SEQUENCE [LARGE SCALE GENOMIC DNA]</scope>
    <source>
        <strain>LT2 / SGSC1412 / ATCC 700720</strain>
    </source>
</reference>
<proteinExistence type="evidence at protein level"/>
<feature type="signal peptide" evidence="1">
    <location>
        <begin position="1"/>
        <end position="22"/>
    </location>
</feature>
<feature type="chain" id="PRO_0000025239" description="Outer membrane porin F">
    <location>
        <begin position="23"/>
        <end position="363"/>
    </location>
</feature>
<feature type="transmembrane region" description="Beta stranded" evidence="1">
    <location>
        <begin position="23"/>
        <end position="28"/>
    </location>
</feature>
<feature type="topological domain" description="Periplasmic" evidence="1">
    <location>
        <position position="29"/>
    </location>
</feature>
<feature type="transmembrane region" description="Beta stranded" evidence="1">
    <location>
        <begin position="30"/>
        <end position="45"/>
    </location>
</feature>
<feature type="topological domain" description="Extracellular" evidence="1">
    <location>
        <begin position="46"/>
        <end position="56"/>
    </location>
</feature>
<feature type="transmembrane region" description="Beta stranded" evidence="1">
    <location>
        <begin position="57"/>
        <end position="69"/>
    </location>
</feature>
<feature type="topological domain" description="Periplasmic" evidence="1">
    <location>
        <begin position="70"/>
        <end position="71"/>
    </location>
</feature>
<feature type="transmembrane region" description="Beta stranded" evidence="1">
    <location>
        <begin position="72"/>
        <end position="84"/>
    </location>
</feature>
<feature type="topological domain" description="Extracellular" evidence="1">
    <location>
        <begin position="85"/>
        <end position="99"/>
    </location>
</feature>
<feature type="transmembrane region" description="Beta stranded" evidence="1">
    <location>
        <begin position="100"/>
        <end position="108"/>
    </location>
</feature>
<feature type="topological domain" description="Periplasmic" evidence="1">
    <location>
        <position position="109"/>
    </location>
</feature>
<feature type="transmembrane region" description="Beta stranded" evidence="1">
    <location>
        <begin position="110"/>
        <end position="117"/>
    </location>
</feature>
<feature type="topological domain" description="Extracellular" evidence="1">
    <location>
        <begin position="118"/>
        <end position="154"/>
    </location>
</feature>
<feature type="transmembrane region" description="Beta stranded" evidence="1">
    <location>
        <begin position="155"/>
        <end position="161"/>
    </location>
</feature>
<feature type="topological domain" description="Periplasmic" evidence="1">
    <location>
        <begin position="162"/>
        <end position="169"/>
    </location>
</feature>
<feature type="transmembrane region" description="Beta stranded" evidence="1">
    <location>
        <begin position="170"/>
        <end position="181"/>
    </location>
</feature>
<feature type="topological domain" description="Extracellular" evidence="1">
    <location>
        <begin position="182"/>
        <end position="192"/>
    </location>
</feature>
<feature type="transmembrane region" description="Beta stranded" evidence="1">
    <location>
        <begin position="193"/>
        <end position="203"/>
    </location>
</feature>
<feature type="topological domain" description="Periplasmic" evidence="1">
    <location>
        <position position="204"/>
    </location>
</feature>
<feature type="transmembrane region" description="Beta stranded" evidence="1">
    <location>
        <begin position="205"/>
        <end position="217"/>
    </location>
</feature>
<feature type="topological domain" description="Extracellular" evidence="1">
    <location>
        <begin position="218"/>
        <end position="230"/>
    </location>
</feature>
<feature type="transmembrane region" description="Beta stranded" evidence="1">
    <location>
        <begin position="231"/>
        <end position="242"/>
    </location>
</feature>
<feature type="topological domain" description="Periplasmic" evidence="1">
    <location>
        <position position="243"/>
    </location>
</feature>
<feature type="transmembrane region" description="Beta stranded" evidence="1">
    <location>
        <begin position="244"/>
        <end position="256"/>
    </location>
</feature>
<feature type="topological domain" description="Extracellular" evidence="1">
    <location>
        <begin position="257"/>
        <end position="272"/>
    </location>
</feature>
<feature type="transmembrane region" description="Beta stranded" evidence="1">
    <location>
        <begin position="273"/>
        <end position="285"/>
    </location>
</feature>
<feature type="topological domain" description="Periplasmic" evidence="1">
    <location>
        <begin position="286"/>
        <end position="287"/>
    </location>
</feature>
<feature type="transmembrane region" description="Beta stranded" evidence="1">
    <location>
        <begin position="288"/>
        <end position="301"/>
    </location>
</feature>
<feature type="topological domain" description="Extracellular" evidence="1">
    <location>
        <begin position="302"/>
        <end position="312"/>
    </location>
</feature>
<feature type="transmembrane region" description="Beta stranded" evidence="1">
    <location>
        <begin position="313"/>
        <end position="324"/>
    </location>
</feature>
<feature type="topological domain" description="Periplasmic" evidence="1">
    <location>
        <begin position="325"/>
        <end position="326"/>
    </location>
</feature>
<feature type="transmembrane region" description="Beta stranded" evidence="1">
    <location>
        <begin position="327"/>
        <end position="336"/>
    </location>
</feature>
<feature type="topological domain" description="Extracellular" evidence="1">
    <location>
        <begin position="337"/>
        <end position="353"/>
    </location>
</feature>
<feature type="transmembrane region" description="Beta stranded" evidence="1">
    <location>
        <begin position="354"/>
        <end position="363"/>
    </location>
</feature>
<feature type="sequence conflict" description="In Ref. 1; CAA83471." evidence="2" ref="1">
    <original>E</original>
    <variation>A</variation>
    <location>
        <position position="232"/>
    </location>
</feature>
<feature type="sequence conflict" description="In Ref. 1; CAA83471." evidence="2" ref="1">
    <original>T</original>
    <variation>V</variation>
    <location>
        <position position="360"/>
    </location>
</feature>
<feature type="strand" evidence="3">
    <location>
        <begin position="35"/>
        <end position="46"/>
    </location>
</feature>
<feature type="strand" evidence="4">
    <location>
        <begin position="48"/>
        <end position="50"/>
    </location>
</feature>
<feature type="strand" evidence="3">
    <location>
        <begin position="58"/>
        <end position="67"/>
    </location>
</feature>
<feature type="strand" evidence="3">
    <location>
        <begin position="69"/>
        <end position="72"/>
    </location>
</feature>
<feature type="strand" evidence="3">
    <location>
        <begin position="74"/>
        <end position="84"/>
    </location>
</feature>
<feature type="helix" evidence="4">
    <location>
        <begin position="92"/>
        <end position="94"/>
    </location>
</feature>
<feature type="strand" evidence="3">
    <location>
        <begin position="96"/>
        <end position="107"/>
    </location>
</feature>
<feature type="turn" evidence="3">
    <location>
        <begin position="108"/>
        <end position="110"/>
    </location>
</feature>
<feature type="strand" evidence="3">
    <location>
        <begin position="111"/>
        <end position="119"/>
    </location>
</feature>
<feature type="helix" evidence="3">
    <location>
        <begin position="123"/>
        <end position="127"/>
    </location>
</feature>
<feature type="turn" evidence="5">
    <location>
        <begin position="128"/>
        <end position="131"/>
    </location>
</feature>
<feature type="strand" evidence="3">
    <location>
        <begin position="132"/>
        <end position="137"/>
    </location>
</feature>
<feature type="turn" evidence="3">
    <location>
        <begin position="140"/>
        <end position="142"/>
    </location>
</feature>
<feature type="strand" evidence="3">
    <location>
        <begin position="143"/>
        <end position="147"/>
    </location>
</feature>
<feature type="strand" evidence="3">
    <location>
        <begin position="150"/>
        <end position="167"/>
    </location>
</feature>
<feature type="strand" evidence="3">
    <location>
        <begin position="169"/>
        <end position="178"/>
    </location>
</feature>
<feature type="strand" evidence="3">
    <location>
        <begin position="183"/>
        <end position="185"/>
    </location>
</feature>
<feature type="helix" evidence="3">
    <location>
        <begin position="187"/>
        <end position="189"/>
    </location>
</feature>
<feature type="strand" evidence="3">
    <location>
        <begin position="193"/>
        <end position="203"/>
    </location>
</feature>
<feature type="strand" evidence="3">
    <location>
        <begin position="206"/>
        <end position="215"/>
    </location>
</feature>
<feature type="helix" evidence="4">
    <location>
        <begin position="219"/>
        <end position="221"/>
    </location>
</feature>
<feature type="strand" evidence="3">
    <location>
        <begin position="222"/>
        <end position="226"/>
    </location>
</feature>
<feature type="strand" evidence="3">
    <location>
        <begin position="231"/>
        <end position="242"/>
    </location>
</feature>
<feature type="strand" evidence="3">
    <location>
        <begin position="245"/>
        <end position="256"/>
    </location>
</feature>
<feature type="strand" evidence="4">
    <location>
        <begin position="259"/>
        <end position="262"/>
    </location>
</feature>
<feature type="turn" evidence="3">
    <location>
        <begin position="263"/>
        <end position="265"/>
    </location>
</feature>
<feature type="strand" evidence="4">
    <location>
        <begin position="267"/>
        <end position="270"/>
    </location>
</feature>
<feature type="strand" evidence="3">
    <location>
        <begin position="272"/>
        <end position="283"/>
    </location>
</feature>
<feature type="strand" evidence="5">
    <location>
        <begin position="286"/>
        <end position="288"/>
    </location>
</feature>
<feature type="strand" evidence="3">
    <location>
        <begin position="291"/>
        <end position="302"/>
    </location>
</feature>
<feature type="turn" evidence="3">
    <location>
        <begin position="304"/>
        <end position="307"/>
    </location>
</feature>
<feature type="strand" evidence="3">
    <location>
        <begin position="310"/>
        <end position="322"/>
    </location>
</feature>
<feature type="strand" evidence="3">
    <location>
        <begin position="326"/>
        <end position="337"/>
    </location>
</feature>
<feature type="turn" evidence="3">
    <location>
        <begin position="346"/>
        <end position="349"/>
    </location>
</feature>
<feature type="strand" evidence="3">
    <location>
        <begin position="354"/>
        <end position="363"/>
    </location>
</feature>
<sequence length="363" mass="40048">MMKRKILAAVIPALLAAATANAAEIYNKDGNKLDLYGKAVGRHVWTTTGDSKNADQTYAQIGFKGETQINTDLTGFGQWEYRTKADRAEGEQQNSNLVRLAFAGLKYAEVGSIDYGRNYGIVYDVESYTDMAPYFSGETWGGAYTDNYMTSRAGGLLTYRNSDFFGLVDGLSFGIQYQGKNQDNHSINSQNGDGVGYTMAYEFDGFGVTAAYSNSKRTNDQQDRDGNGDRAESWAVGAKYDANNVYLAAVYAETRNMSIVENTVTDTVEMANKTQNLEVVAQYQFDFGLRPAISYVQSKGKQLNGAGGSADLAKYIQAGATYYFNKNMNVWVDYRFNLLDENDYSSSYVGTDDQAAVGITYQF</sequence>
<keyword id="KW-0002">3D-structure</keyword>
<keyword id="KW-0998">Cell outer membrane</keyword>
<keyword id="KW-0406">Ion transport</keyword>
<keyword id="KW-0472">Membrane</keyword>
<keyword id="KW-0626">Porin</keyword>
<keyword id="KW-1185">Reference proteome</keyword>
<keyword id="KW-0732">Signal</keyword>
<keyword id="KW-0812">Transmembrane</keyword>
<keyword id="KW-1134">Transmembrane beta strand</keyword>
<keyword id="KW-0813">Transport</keyword>